<reference key="1">
    <citation type="journal article" date="1995" name="DNA Res.">
        <title>Sequence analysis of the genome of the unicellular cyanobacterium Synechocystis sp. strain PCC6803. I. Sequence features in the 1 Mb region from map positions 64% to 92% of the genome.</title>
        <authorList>
            <person name="Kaneko T."/>
            <person name="Tanaka A."/>
            <person name="Sato S."/>
            <person name="Kotani H."/>
            <person name="Sazuka T."/>
            <person name="Miyajima N."/>
            <person name="Sugiura M."/>
            <person name="Tabata S."/>
        </authorList>
    </citation>
    <scope>NUCLEOTIDE SEQUENCE [LARGE SCALE GENOMIC DNA]</scope>
    <source>
        <strain>ATCC 27184 / PCC 6803 / N-1</strain>
    </source>
</reference>
<reference key="2">
    <citation type="journal article" date="1996" name="DNA Res.">
        <title>Sequence analysis of the genome of the unicellular cyanobacterium Synechocystis sp. strain PCC6803. II. Sequence determination of the entire genome and assignment of potential protein-coding regions.</title>
        <authorList>
            <person name="Kaneko T."/>
            <person name="Sato S."/>
            <person name="Kotani H."/>
            <person name="Tanaka A."/>
            <person name="Asamizu E."/>
            <person name="Nakamura Y."/>
            <person name="Miyajima N."/>
            <person name="Hirosawa M."/>
            <person name="Sugiura M."/>
            <person name="Sasamoto S."/>
            <person name="Kimura T."/>
            <person name="Hosouchi T."/>
            <person name="Matsuno A."/>
            <person name="Muraki A."/>
            <person name="Nakazaki N."/>
            <person name="Naruo K."/>
            <person name="Okumura S."/>
            <person name="Shimpo S."/>
            <person name="Takeuchi C."/>
            <person name="Wada T."/>
            <person name="Watanabe A."/>
            <person name="Yamada M."/>
            <person name="Yasuda M."/>
            <person name="Tabata S."/>
        </authorList>
    </citation>
    <scope>NUCLEOTIDE SEQUENCE [LARGE SCALE GENOMIC DNA]</scope>
    <source>
        <strain>ATCC 27184 / PCC 6803 / Kazusa</strain>
    </source>
</reference>
<accession>P49057</accession>
<feature type="chain" id="PRO_0000140196" description="GMP synthase [glutamine-hydrolyzing]">
    <location>
        <begin position="1"/>
        <end position="542"/>
    </location>
</feature>
<feature type="domain" description="Glutamine amidotransferase type-1">
    <location>
        <begin position="28"/>
        <end position="218"/>
    </location>
</feature>
<feature type="domain" description="GMPS ATP-PPase">
    <location>
        <begin position="219"/>
        <end position="417"/>
    </location>
</feature>
<feature type="active site" description="Nucleophile" evidence="1">
    <location>
        <position position="105"/>
    </location>
</feature>
<feature type="active site" evidence="1">
    <location>
        <position position="192"/>
    </location>
</feature>
<feature type="active site" evidence="1">
    <location>
        <position position="194"/>
    </location>
</feature>
<feature type="binding site" evidence="1">
    <location>
        <begin position="246"/>
        <end position="252"/>
    </location>
    <ligand>
        <name>ATP</name>
        <dbReference type="ChEBI" id="CHEBI:30616"/>
    </ligand>
</feature>
<evidence type="ECO:0000250" key="1"/>
<organism>
    <name type="scientific">Synechocystis sp. (strain ATCC 27184 / PCC 6803 / Kazusa)</name>
    <dbReference type="NCBI Taxonomy" id="1111708"/>
    <lineage>
        <taxon>Bacteria</taxon>
        <taxon>Bacillati</taxon>
        <taxon>Cyanobacteriota</taxon>
        <taxon>Cyanophyceae</taxon>
        <taxon>Synechococcales</taxon>
        <taxon>Merismopediaceae</taxon>
        <taxon>Synechocystis</taxon>
    </lineage>
</organism>
<keyword id="KW-0067">ATP-binding</keyword>
<keyword id="KW-0315">Glutamine amidotransferase</keyword>
<keyword id="KW-0332">GMP biosynthesis</keyword>
<keyword id="KW-0436">Ligase</keyword>
<keyword id="KW-0547">Nucleotide-binding</keyword>
<keyword id="KW-0658">Purine biosynthesis</keyword>
<keyword id="KW-1185">Reference proteome</keyword>
<sequence length="542" mass="61009">MTTQIPVPPVVSDQALPDRISDRLKGQIIVILDFGSQYSELIARRIRETEVYSEVLSYRTTAQQLREIKPKGIILSGGPNSVYDQGAPECDPEIFQLGVPVLGVCYGMQLMVKQLGGRVERAKRGEYGKASLHIDDPTDLLTNVENDSTMWMSHGDSCVDLPTGFEILAHTDNTPCAAIADHQKALFGVQFHPEVVHSVGGIALIRNFVYHICHCEPTWTTAAFIEESIREVRSQVGDRRVLLALSGGVDSSTLAFLLHRAIGDNLTCMFIDQGFMRKGEPERLVELFDHQFHIPVQYVNARDRFLKQLEGVTDPEEKRRLIGHEFIQVFEEESNRLGPFDYLAQGTLYPDVIESADSNVDPKTGERVAVKIKSHHNVGGLPKNLRFKLVEPLRKLFKDEVRKLGRSIGLPEEIVRRHPFPGPGLAIRIIGEVTSERLNILRDADFIVRDEISKRGIYHDYWQAFAVLLPIRSVGVMGDKRTYAHPVVLRFITSEDGMTADWARVPYDILEAISNRIVNEVKGVNRVVYDITSKPPGTIEWE</sequence>
<protein>
    <recommendedName>
        <fullName>GMP synthase [glutamine-hydrolyzing]</fullName>
        <ecNumber>6.3.5.2</ecNumber>
    </recommendedName>
    <alternativeName>
        <fullName>GMP synthetase</fullName>
    </alternativeName>
    <alternativeName>
        <fullName>Glutamine amidotransferase</fullName>
    </alternativeName>
</protein>
<name>GUAA_SYNY3</name>
<gene>
    <name type="primary">guaA</name>
    <name type="ordered locus">slr0213</name>
</gene>
<proteinExistence type="inferred from homology"/>
<dbReference type="EC" id="6.3.5.2"/>
<dbReference type="EMBL" id="BA000022">
    <property type="protein sequence ID" value="BAA10210.1"/>
    <property type="molecule type" value="Genomic_DNA"/>
</dbReference>
<dbReference type="PIR" id="S76358">
    <property type="entry name" value="S76358"/>
</dbReference>
<dbReference type="SMR" id="P49057"/>
<dbReference type="FunCoup" id="P49057">
    <property type="interactions" value="495"/>
</dbReference>
<dbReference type="IntAct" id="P49057">
    <property type="interactions" value="3"/>
</dbReference>
<dbReference type="STRING" id="1148.gene:10499709"/>
<dbReference type="MEROPS" id="C26.957"/>
<dbReference type="PaxDb" id="1148-1001583"/>
<dbReference type="EnsemblBacteria" id="BAA10210">
    <property type="protein sequence ID" value="BAA10210"/>
    <property type="gene ID" value="BAA10210"/>
</dbReference>
<dbReference type="KEGG" id="syn:slr0213"/>
<dbReference type="eggNOG" id="COG0518">
    <property type="taxonomic scope" value="Bacteria"/>
</dbReference>
<dbReference type="eggNOG" id="COG0519">
    <property type="taxonomic scope" value="Bacteria"/>
</dbReference>
<dbReference type="InParanoid" id="P49057"/>
<dbReference type="PhylomeDB" id="P49057"/>
<dbReference type="UniPathway" id="UPA00189">
    <property type="reaction ID" value="UER00296"/>
</dbReference>
<dbReference type="Proteomes" id="UP000001425">
    <property type="component" value="Chromosome"/>
</dbReference>
<dbReference type="GO" id="GO:0005829">
    <property type="term" value="C:cytosol"/>
    <property type="evidence" value="ECO:0000318"/>
    <property type="project" value="GO_Central"/>
</dbReference>
<dbReference type="GO" id="GO:0005524">
    <property type="term" value="F:ATP binding"/>
    <property type="evidence" value="ECO:0007669"/>
    <property type="project" value="UniProtKB-UniRule"/>
</dbReference>
<dbReference type="GO" id="GO:0003921">
    <property type="term" value="F:GMP synthase activity"/>
    <property type="evidence" value="ECO:0000318"/>
    <property type="project" value="GO_Central"/>
</dbReference>
<dbReference type="GO" id="GO:0006177">
    <property type="term" value="P:GMP biosynthetic process"/>
    <property type="evidence" value="ECO:0000318"/>
    <property type="project" value="GO_Central"/>
</dbReference>
<dbReference type="CDD" id="cd01742">
    <property type="entry name" value="GATase1_GMP_Synthase"/>
    <property type="match status" value="1"/>
</dbReference>
<dbReference type="CDD" id="cd01997">
    <property type="entry name" value="GMP_synthase_C"/>
    <property type="match status" value="1"/>
</dbReference>
<dbReference type="FunFam" id="3.30.300.10:FF:000002">
    <property type="entry name" value="GMP synthase [glutamine-hydrolyzing]"/>
    <property type="match status" value="1"/>
</dbReference>
<dbReference type="FunFam" id="3.40.50.620:FF:000001">
    <property type="entry name" value="GMP synthase [glutamine-hydrolyzing]"/>
    <property type="match status" value="1"/>
</dbReference>
<dbReference type="FunFam" id="3.40.50.880:FF:000001">
    <property type="entry name" value="GMP synthase [glutamine-hydrolyzing]"/>
    <property type="match status" value="1"/>
</dbReference>
<dbReference type="Gene3D" id="3.30.300.10">
    <property type="match status" value="1"/>
</dbReference>
<dbReference type="Gene3D" id="3.40.50.880">
    <property type="match status" value="1"/>
</dbReference>
<dbReference type="Gene3D" id="3.40.50.620">
    <property type="entry name" value="HUPs"/>
    <property type="match status" value="1"/>
</dbReference>
<dbReference type="HAMAP" id="MF_00344">
    <property type="entry name" value="GMP_synthase"/>
    <property type="match status" value="1"/>
</dbReference>
<dbReference type="InterPro" id="IPR029062">
    <property type="entry name" value="Class_I_gatase-like"/>
</dbReference>
<dbReference type="InterPro" id="IPR017926">
    <property type="entry name" value="GATASE"/>
</dbReference>
<dbReference type="InterPro" id="IPR001674">
    <property type="entry name" value="GMP_synth_C"/>
</dbReference>
<dbReference type="InterPro" id="IPR004739">
    <property type="entry name" value="GMP_synth_GATase"/>
</dbReference>
<dbReference type="InterPro" id="IPR022955">
    <property type="entry name" value="GMP_synthase"/>
</dbReference>
<dbReference type="InterPro" id="IPR025777">
    <property type="entry name" value="GMPS_ATP_PPase_dom"/>
</dbReference>
<dbReference type="InterPro" id="IPR014729">
    <property type="entry name" value="Rossmann-like_a/b/a_fold"/>
</dbReference>
<dbReference type="NCBIfam" id="TIGR00884">
    <property type="entry name" value="guaA_Cterm"/>
    <property type="match status" value="1"/>
</dbReference>
<dbReference type="NCBIfam" id="TIGR00888">
    <property type="entry name" value="guaA_Nterm"/>
    <property type="match status" value="1"/>
</dbReference>
<dbReference type="NCBIfam" id="NF000848">
    <property type="entry name" value="PRK00074.1"/>
    <property type="match status" value="1"/>
</dbReference>
<dbReference type="PANTHER" id="PTHR11922:SF2">
    <property type="entry name" value="GMP SYNTHASE [GLUTAMINE-HYDROLYZING]"/>
    <property type="match status" value="1"/>
</dbReference>
<dbReference type="PANTHER" id="PTHR11922">
    <property type="entry name" value="GMP SYNTHASE-RELATED"/>
    <property type="match status" value="1"/>
</dbReference>
<dbReference type="Pfam" id="PF00117">
    <property type="entry name" value="GATase"/>
    <property type="match status" value="1"/>
</dbReference>
<dbReference type="Pfam" id="PF00958">
    <property type="entry name" value="GMP_synt_C"/>
    <property type="match status" value="1"/>
</dbReference>
<dbReference type="PRINTS" id="PR00097">
    <property type="entry name" value="ANTSNTHASEII"/>
</dbReference>
<dbReference type="PRINTS" id="PR00099">
    <property type="entry name" value="CPSGATASE"/>
</dbReference>
<dbReference type="PRINTS" id="PR00096">
    <property type="entry name" value="GATASE"/>
</dbReference>
<dbReference type="SUPFAM" id="SSF52402">
    <property type="entry name" value="Adenine nucleotide alpha hydrolases-like"/>
    <property type="match status" value="1"/>
</dbReference>
<dbReference type="SUPFAM" id="SSF52317">
    <property type="entry name" value="Class I glutamine amidotransferase-like"/>
    <property type="match status" value="1"/>
</dbReference>
<dbReference type="SUPFAM" id="SSF54810">
    <property type="entry name" value="GMP synthetase C-terminal dimerisation domain"/>
    <property type="match status" value="1"/>
</dbReference>
<dbReference type="PROSITE" id="PS51273">
    <property type="entry name" value="GATASE_TYPE_1"/>
    <property type="match status" value="1"/>
</dbReference>
<dbReference type="PROSITE" id="PS51553">
    <property type="entry name" value="GMPS_ATP_PPASE"/>
    <property type="match status" value="1"/>
</dbReference>
<comment type="function">
    <text evidence="1">Catalyzes the synthesis of GMP from XMP.</text>
</comment>
<comment type="catalytic activity">
    <reaction>
        <text>XMP + L-glutamine + ATP + H2O = GMP + L-glutamate + AMP + diphosphate + 2 H(+)</text>
        <dbReference type="Rhea" id="RHEA:11680"/>
        <dbReference type="ChEBI" id="CHEBI:15377"/>
        <dbReference type="ChEBI" id="CHEBI:15378"/>
        <dbReference type="ChEBI" id="CHEBI:29985"/>
        <dbReference type="ChEBI" id="CHEBI:30616"/>
        <dbReference type="ChEBI" id="CHEBI:33019"/>
        <dbReference type="ChEBI" id="CHEBI:57464"/>
        <dbReference type="ChEBI" id="CHEBI:58115"/>
        <dbReference type="ChEBI" id="CHEBI:58359"/>
        <dbReference type="ChEBI" id="CHEBI:456215"/>
        <dbReference type="EC" id="6.3.5.2"/>
    </reaction>
</comment>
<comment type="pathway">
    <text>Purine metabolism; GMP biosynthesis; GMP from XMP (L-Gln route): step 1/1.</text>
</comment>
<comment type="subunit">
    <text evidence="1">Homodimer.</text>
</comment>